<reference key="1">
    <citation type="journal article" date="2010" name="Genome Biol. Evol.">
        <title>Continuing evolution of Burkholderia mallei through genome reduction and large-scale rearrangements.</title>
        <authorList>
            <person name="Losada L."/>
            <person name="Ronning C.M."/>
            <person name="DeShazer D."/>
            <person name="Woods D."/>
            <person name="Fedorova N."/>
            <person name="Kim H.S."/>
            <person name="Shabalina S.A."/>
            <person name="Pearson T.R."/>
            <person name="Brinkac L."/>
            <person name="Tan P."/>
            <person name="Nandi T."/>
            <person name="Crabtree J."/>
            <person name="Badger J."/>
            <person name="Beckstrom-Sternberg S."/>
            <person name="Saqib M."/>
            <person name="Schutzer S.E."/>
            <person name="Keim P."/>
            <person name="Nierman W.C."/>
        </authorList>
    </citation>
    <scope>NUCLEOTIDE SEQUENCE [LARGE SCALE GENOMIC DNA]</scope>
    <source>
        <strain>1710b</strain>
    </source>
</reference>
<name>MUTS_BURP1</name>
<organism>
    <name type="scientific">Burkholderia pseudomallei (strain 1710b)</name>
    <dbReference type="NCBI Taxonomy" id="320372"/>
    <lineage>
        <taxon>Bacteria</taxon>
        <taxon>Pseudomonadati</taxon>
        <taxon>Pseudomonadota</taxon>
        <taxon>Betaproteobacteria</taxon>
        <taxon>Burkholderiales</taxon>
        <taxon>Burkholderiaceae</taxon>
        <taxon>Burkholderia</taxon>
        <taxon>pseudomallei group</taxon>
    </lineage>
</organism>
<evidence type="ECO:0000255" key="1">
    <source>
        <dbReference type="HAMAP-Rule" id="MF_00096"/>
    </source>
</evidence>
<evidence type="ECO:0000305" key="2"/>
<accession>Q3JQS6</accession>
<keyword id="KW-0067">ATP-binding</keyword>
<keyword id="KW-0227">DNA damage</keyword>
<keyword id="KW-0234">DNA repair</keyword>
<keyword id="KW-0238">DNA-binding</keyword>
<keyword id="KW-0547">Nucleotide-binding</keyword>
<comment type="function">
    <text evidence="1">This protein is involved in the repair of mismatches in DNA. It is possible that it carries out the mismatch recognition step. This protein has a weak ATPase activity.</text>
</comment>
<comment type="similarity">
    <text evidence="1">Belongs to the DNA mismatch repair MutS family.</text>
</comment>
<comment type="sequence caution" evidence="2">
    <conflict type="erroneous initiation">
        <sequence resource="EMBL-CDS" id="ABA47837"/>
    </conflict>
</comment>
<protein>
    <recommendedName>
        <fullName evidence="1">DNA mismatch repair protein MutS</fullName>
    </recommendedName>
</protein>
<proteinExistence type="inferred from homology"/>
<gene>
    <name evidence="1" type="primary">mutS</name>
    <name type="ordered locus">BURPS1710b_2691</name>
</gene>
<dbReference type="EMBL" id="CP000124">
    <property type="protein sequence ID" value="ABA47837.1"/>
    <property type="status" value="ALT_INIT"/>
    <property type="molecule type" value="Genomic_DNA"/>
</dbReference>
<dbReference type="SMR" id="Q3JQS6"/>
<dbReference type="EnsemblBacteria" id="ABA47837">
    <property type="protein sequence ID" value="ABA47837"/>
    <property type="gene ID" value="BURPS1710b_2691"/>
</dbReference>
<dbReference type="KEGG" id="bpm:BURPS1710b_2691"/>
<dbReference type="HOGENOM" id="CLU_002472_4_0_4"/>
<dbReference type="Proteomes" id="UP000002700">
    <property type="component" value="Chromosome I"/>
</dbReference>
<dbReference type="GO" id="GO:0005829">
    <property type="term" value="C:cytosol"/>
    <property type="evidence" value="ECO:0007669"/>
    <property type="project" value="TreeGrafter"/>
</dbReference>
<dbReference type="GO" id="GO:0005524">
    <property type="term" value="F:ATP binding"/>
    <property type="evidence" value="ECO:0007669"/>
    <property type="project" value="UniProtKB-UniRule"/>
</dbReference>
<dbReference type="GO" id="GO:0140664">
    <property type="term" value="F:ATP-dependent DNA damage sensor activity"/>
    <property type="evidence" value="ECO:0007669"/>
    <property type="project" value="InterPro"/>
</dbReference>
<dbReference type="GO" id="GO:0003684">
    <property type="term" value="F:damaged DNA binding"/>
    <property type="evidence" value="ECO:0007669"/>
    <property type="project" value="UniProtKB-UniRule"/>
</dbReference>
<dbReference type="GO" id="GO:0030983">
    <property type="term" value="F:mismatched DNA binding"/>
    <property type="evidence" value="ECO:0007669"/>
    <property type="project" value="InterPro"/>
</dbReference>
<dbReference type="GO" id="GO:0006298">
    <property type="term" value="P:mismatch repair"/>
    <property type="evidence" value="ECO:0007669"/>
    <property type="project" value="UniProtKB-UniRule"/>
</dbReference>
<dbReference type="CDD" id="cd03284">
    <property type="entry name" value="ABC_MutS1"/>
    <property type="match status" value="1"/>
</dbReference>
<dbReference type="FunFam" id="3.40.1170.10:FF:000001">
    <property type="entry name" value="DNA mismatch repair protein MutS"/>
    <property type="match status" value="1"/>
</dbReference>
<dbReference type="FunFam" id="3.40.50.300:FF:000870">
    <property type="entry name" value="MutS protein homolog 4"/>
    <property type="match status" value="1"/>
</dbReference>
<dbReference type="Gene3D" id="1.10.1420.10">
    <property type="match status" value="2"/>
</dbReference>
<dbReference type="Gene3D" id="6.10.140.430">
    <property type="match status" value="1"/>
</dbReference>
<dbReference type="Gene3D" id="3.40.1170.10">
    <property type="entry name" value="DNA repair protein MutS, domain I"/>
    <property type="match status" value="1"/>
</dbReference>
<dbReference type="Gene3D" id="3.30.420.110">
    <property type="entry name" value="MutS, connector domain"/>
    <property type="match status" value="1"/>
</dbReference>
<dbReference type="Gene3D" id="3.40.50.300">
    <property type="entry name" value="P-loop containing nucleotide triphosphate hydrolases"/>
    <property type="match status" value="1"/>
</dbReference>
<dbReference type="HAMAP" id="MF_00096">
    <property type="entry name" value="MutS"/>
    <property type="match status" value="1"/>
</dbReference>
<dbReference type="InterPro" id="IPR005748">
    <property type="entry name" value="DNA_mismatch_repair_MutS"/>
</dbReference>
<dbReference type="InterPro" id="IPR007695">
    <property type="entry name" value="DNA_mismatch_repair_MutS-lik_N"/>
</dbReference>
<dbReference type="InterPro" id="IPR017261">
    <property type="entry name" value="DNA_mismatch_repair_MutS/MSH"/>
</dbReference>
<dbReference type="InterPro" id="IPR000432">
    <property type="entry name" value="DNA_mismatch_repair_MutS_C"/>
</dbReference>
<dbReference type="InterPro" id="IPR007861">
    <property type="entry name" value="DNA_mismatch_repair_MutS_clamp"/>
</dbReference>
<dbReference type="InterPro" id="IPR007696">
    <property type="entry name" value="DNA_mismatch_repair_MutS_core"/>
</dbReference>
<dbReference type="InterPro" id="IPR016151">
    <property type="entry name" value="DNA_mismatch_repair_MutS_N"/>
</dbReference>
<dbReference type="InterPro" id="IPR036187">
    <property type="entry name" value="DNA_mismatch_repair_MutS_sf"/>
</dbReference>
<dbReference type="InterPro" id="IPR007860">
    <property type="entry name" value="DNA_mmatch_repair_MutS_con_dom"/>
</dbReference>
<dbReference type="InterPro" id="IPR045076">
    <property type="entry name" value="MutS"/>
</dbReference>
<dbReference type="InterPro" id="IPR036678">
    <property type="entry name" value="MutS_con_dom_sf"/>
</dbReference>
<dbReference type="InterPro" id="IPR027417">
    <property type="entry name" value="P-loop_NTPase"/>
</dbReference>
<dbReference type="NCBIfam" id="TIGR01070">
    <property type="entry name" value="mutS1"/>
    <property type="match status" value="1"/>
</dbReference>
<dbReference type="NCBIfam" id="NF003810">
    <property type="entry name" value="PRK05399.1"/>
    <property type="match status" value="1"/>
</dbReference>
<dbReference type="PANTHER" id="PTHR11361:SF34">
    <property type="entry name" value="DNA MISMATCH REPAIR PROTEIN MSH1, MITOCHONDRIAL"/>
    <property type="match status" value="1"/>
</dbReference>
<dbReference type="PANTHER" id="PTHR11361">
    <property type="entry name" value="DNA MISMATCH REPAIR PROTEIN MUTS FAMILY MEMBER"/>
    <property type="match status" value="1"/>
</dbReference>
<dbReference type="Pfam" id="PF01624">
    <property type="entry name" value="MutS_I"/>
    <property type="match status" value="1"/>
</dbReference>
<dbReference type="Pfam" id="PF05188">
    <property type="entry name" value="MutS_II"/>
    <property type="match status" value="1"/>
</dbReference>
<dbReference type="Pfam" id="PF05192">
    <property type="entry name" value="MutS_III"/>
    <property type="match status" value="1"/>
</dbReference>
<dbReference type="Pfam" id="PF05190">
    <property type="entry name" value="MutS_IV"/>
    <property type="match status" value="1"/>
</dbReference>
<dbReference type="Pfam" id="PF00488">
    <property type="entry name" value="MutS_V"/>
    <property type="match status" value="1"/>
</dbReference>
<dbReference type="PIRSF" id="PIRSF037677">
    <property type="entry name" value="DNA_mis_repair_Msh6"/>
    <property type="match status" value="1"/>
</dbReference>
<dbReference type="SMART" id="SM00534">
    <property type="entry name" value="MUTSac"/>
    <property type="match status" value="1"/>
</dbReference>
<dbReference type="SMART" id="SM00533">
    <property type="entry name" value="MUTSd"/>
    <property type="match status" value="1"/>
</dbReference>
<dbReference type="SUPFAM" id="SSF55271">
    <property type="entry name" value="DNA repair protein MutS, domain I"/>
    <property type="match status" value="1"/>
</dbReference>
<dbReference type="SUPFAM" id="SSF53150">
    <property type="entry name" value="DNA repair protein MutS, domain II"/>
    <property type="match status" value="1"/>
</dbReference>
<dbReference type="SUPFAM" id="SSF48334">
    <property type="entry name" value="DNA repair protein MutS, domain III"/>
    <property type="match status" value="1"/>
</dbReference>
<dbReference type="SUPFAM" id="SSF52540">
    <property type="entry name" value="P-loop containing nucleoside triphosphate hydrolases"/>
    <property type="match status" value="1"/>
</dbReference>
<dbReference type="PROSITE" id="PS00486">
    <property type="entry name" value="DNA_MISMATCH_REPAIR_2"/>
    <property type="match status" value="1"/>
</dbReference>
<feature type="chain" id="PRO_0000224357" description="DNA mismatch repair protein MutS">
    <location>
        <begin position="1"/>
        <end position="890"/>
    </location>
</feature>
<feature type="binding site" evidence="1">
    <location>
        <begin position="634"/>
        <end position="641"/>
    </location>
    <ligand>
        <name>ATP</name>
        <dbReference type="ChEBI" id="CHEBI:30616"/>
    </ligand>
</feature>
<sequence length="890" mass="96284">MATQIDASSEAAAATAAAQHTPMMQQYLRIKSEHPDTLVFYRMGDFYELFFEDAEKAARLLDLTLTQRGASAGTPIKMAGVPHHAVEQYLAKLVKFGESAAICEQIGDPATSKGPVERKVVRVVTPGTLTDAALLSDKSDVFLLALCVGHNKRGVASNIGLAWLNLASGALRLAELAPDQLGAALERIRPAEILAADGTIESVPAGMGAITRVPAWHFDIASGTQRLCDQLEVASLDGFGAQALTSANGAAGALLIYAAATQGQQLRHVRSLKVENESEYIGLDPSTRRNLELTETLRGTESPTLYSLLDTCCTAMGSRLLRHWLHHPPRASVAAQARHQAIGALLDAPPNAGLDSLRSALRQIADVERITGRLALLSARPRDLSSLRDTFAALPALRERVAEIASNAAALGRLEAALEPPPGCLDLLTRAIAAEPAAMVRDGGVIARGYDAELDELRDISENCGQFLIDLETRERARTGISNLRVEYNKVHGFYIEVTRGQTDKVPDDYRRRQTLKNAERYITPELKTFEDKALSAQERALARERALYDGVLQALLPHIEGCQRVASGLAELDLLAAFAERARTLDWVAPEFTDEIGIEIDQGRHPVVEAQVEQFIANDCALNPERKLLLITGPNMGGKSTFMRQTALIALMAYVGSYVPAKAARFGPIDRIFTRIGAADDLAGGRSTFMVEMTEAAAILNDATPHSLVLMDEIGRGTSTFDGLALAWAIARHLLSHNRCYTLFATHYFELTQLPVEFPQAANVHLSAVEHGHGIVFLHAVEEGPANQSYGLQVAQLAGVPAPVIRAARKHLAHLEQQSAAQATPQLDLFAAPPVVDEPECNEPPAATPHPALERLLELDPDDLKPRDALDLLYELHTLARSGPADAQR</sequence>